<reference key="1">
    <citation type="journal article" date="2005" name="Infect. Immun.">
        <title>Whole-genome analyses of speciation events in pathogenic Brucellae.</title>
        <authorList>
            <person name="Chain P.S."/>
            <person name="Comerci D.J."/>
            <person name="Tolmasky M.E."/>
            <person name="Larimer F.W."/>
            <person name="Malfatti S.A."/>
            <person name="Vergez L.M."/>
            <person name="Aguero F."/>
            <person name="Land M.L."/>
            <person name="Ugalde R.A."/>
            <person name="Garcia E."/>
        </authorList>
    </citation>
    <scope>NUCLEOTIDE SEQUENCE [LARGE SCALE GENOMIC DNA]</scope>
    <source>
        <strain>2308</strain>
    </source>
</reference>
<reference key="2">
    <citation type="journal article" date="2006" name="Proc. Natl. Acad. Sci. U.S.A.">
        <title>A B lymphocyte mitogen is a Brucella abortus virulence factor required for persistent infection.</title>
        <authorList>
            <person name="Spera J.M."/>
            <person name="Ugalde J.E."/>
            <person name="Mucci J."/>
            <person name="Comerci D.J."/>
            <person name="Ugalde R.A."/>
        </authorList>
    </citation>
    <scope>ROLE IN VIRULENCE</scope>
    <scope>MUTAGENESIS OF CYS-253</scope>
</reference>
<dbReference type="EC" id="5.1.1.8"/>
<dbReference type="EMBL" id="AM040264">
    <property type="protein sequence ID" value="CAJ11756.1"/>
    <property type="molecule type" value="Genomic_DNA"/>
</dbReference>
<dbReference type="RefSeq" id="WP_002964871.1">
    <property type="nucleotide sequence ID" value="NZ_KN046823.1"/>
</dbReference>
<dbReference type="SMR" id="Q2YLF3"/>
<dbReference type="STRING" id="359391.BAB1_1800"/>
<dbReference type="KEGG" id="bmf:BAB1_1800"/>
<dbReference type="PATRIC" id="fig|359391.11.peg.312"/>
<dbReference type="HOGENOM" id="CLU_036729_0_0_5"/>
<dbReference type="PhylomeDB" id="Q2YLF3"/>
<dbReference type="BRENDA" id="5.1.1.8">
    <property type="organism ID" value="994"/>
</dbReference>
<dbReference type="PHI-base" id="PHI:10246"/>
<dbReference type="Proteomes" id="UP000002719">
    <property type="component" value="Chromosome I"/>
</dbReference>
<dbReference type="GO" id="GO:0047580">
    <property type="term" value="F:4-hydroxyproline epimerase activity"/>
    <property type="evidence" value="ECO:0007669"/>
    <property type="project" value="UniProtKB-EC"/>
</dbReference>
<dbReference type="GO" id="GO:0044068">
    <property type="term" value="P:symbiont-mediated perturbation of host cellular process"/>
    <property type="evidence" value="ECO:0000314"/>
    <property type="project" value="CACAO"/>
</dbReference>
<dbReference type="FunFam" id="3.10.310.10:FF:000005">
    <property type="entry name" value="Proline racemase"/>
    <property type="match status" value="1"/>
</dbReference>
<dbReference type="Gene3D" id="3.10.310.10">
    <property type="entry name" value="Diaminopimelate Epimerase, Chain A, domain 1"/>
    <property type="match status" value="2"/>
</dbReference>
<dbReference type="InterPro" id="IPR008794">
    <property type="entry name" value="Pro_racemase_fam"/>
</dbReference>
<dbReference type="NCBIfam" id="NF010578">
    <property type="entry name" value="PRK13971.1"/>
    <property type="match status" value="1"/>
</dbReference>
<dbReference type="PANTHER" id="PTHR33442">
    <property type="entry name" value="TRANS-3-HYDROXY-L-PROLINE DEHYDRATASE"/>
    <property type="match status" value="1"/>
</dbReference>
<dbReference type="PANTHER" id="PTHR33442:SF1">
    <property type="entry name" value="TRANS-3-HYDROXY-L-PROLINE DEHYDRATASE"/>
    <property type="match status" value="1"/>
</dbReference>
<dbReference type="Pfam" id="PF05544">
    <property type="entry name" value="Pro_racemase"/>
    <property type="match status" value="1"/>
</dbReference>
<dbReference type="PIRSF" id="PIRSF029792">
    <property type="entry name" value="Pro_racemase"/>
    <property type="match status" value="1"/>
</dbReference>
<dbReference type="SFLD" id="SFLDS00028">
    <property type="entry name" value="Proline_Racemase"/>
    <property type="match status" value="1"/>
</dbReference>
<dbReference type="SUPFAM" id="SSF54506">
    <property type="entry name" value="Diaminopimelate epimerase-like"/>
    <property type="match status" value="1"/>
</dbReference>
<evidence type="ECO:0000250" key="1"/>
<evidence type="ECO:0000250" key="2">
    <source>
        <dbReference type="UniProtKB" id="Q4KGU2"/>
    </source>
</evidence>
<evidence type="ECO:0000269" key="3">
    <source>
    </source>
</evidence>
<evidence type="ECO:0000305" key="4"/>
<feature type="chain" id="PRO_0000354026" description="4-hydroxyproline epimerase">
    <location>
        <begin position="1"/>
        <end position="333"/>
    </location>
</feature>
<feature type="active site" description="Proton acceptor" evidence="2">
    <location>
        <position position="90"/>
    </location>
</feature>
<feature type="active site" description="Proton donor" evidence="2">
    <location>
        <position position="253"/>
    </location>
</feature>
<feature type="binding site" evidence="2">
    <location>
        <begin position="91"/>
        <end position="92"/>
    </location>
    <ligand>
        <name>substrate</name>
    </ligand>
</feature>
<feature type="binding site" evidence="2">
    <location>
        <position position="249"/>
    </location>
    <ligand>
        <name>substrate</name>
    </ligand>
</feature>
<feature type="binding site" evidence="2">
    <location>
        <begin position="254"/>
        <end position="255"/>
    </location>
    <ligand>
        <name>substrate</name>
    </ligand>
</feature>
<feature type="mutagenesis site" description="Loss of function; loss of mitogenic activity on mouse splenocytes." evidence="3">
    <original>C</original>
    <variation>T</variation>
    <location>
        <position position="253"/>
    </location>
</feature>
<proteinExistence type="evidence at protein level"/>
<organism>
    <name type="scientific">Brucella abortus (strain 2308)</name>
    <dbReference type="NCBI Taxonomy" id="359391"/>
    <lineage>
        <taxon>Bacteria</taxon>
        <taxon>Pseudomonadati</taxon>
        <taxon>Pseudomonadota</taxon>
        <taxon>Alphaproteobacteria</taxon>
        <taxon>Hyphomicrobiales</taxon>
        <taxon>Brucellaceae</taxon>
        <taxon>Brucella/Ochrobactrum group</taxon>
        <taxon>Brucella</taxon>
    </lineage>
</organism>
<accession>Q2YLF3</accession>
<comment type="function">
    <text evidence="1 3">Allows intracellular utilization of 4-hydroxyproline, one of the major constituents of host collagen, by converting 4-hydroxy-L-proline to 4-hydroxy-D-proline, which can be further metabolized by intracellular 4-hydroxy-D-proline oxidases. Strong B-cell mitogen. Plays an important role in the regulation of intra- and extracellular amino acid pools, allowing the bacterium to profit from host precursors and enzymatic pathways (By similarity). Directly involved in the immune regulation of host. Elicits B-lymphocyte polyclonal activation, resulting in early and transient nonresponsive immune condition of the host.</text>
</comment>
<comment type="catalytic activity">
    <reaction>
        <text>trans-4-hydroxy-L-proline = cis-4-hydroxy-D-proline</text>
        <dbReference type="Rhea" id="RHEA:21152"/>
        <dbReference type="ChEBI" id="CHEBI:57690"/>
        <dbReference type="ChEBI" id="CHEBI:58375"/>
        <dbReference type="EC" id="5.1.1.8"/>
    </reaction>
</comment>
<comment type="subunit">
    <text evidence="1">Homodimer.</text>
</comment>
<comment type="similarity">
    <text evidence="4">Belongs to the proline racemase family.</text>
</comment>
<protein>
    <recommendedName>
        <fullName>4-hydroxyproline epimerase</fullName>
        <ecNumber>5.1.1.8</ecNumber>
    </recommendedName>
    <alternativeName>
        <fullName>Hydroxyproline-2-epimerase</fullName>
        <shortName>HyPRE</shortName>
    </alternativeName>
</protein>
<sequence length="333" mass="36670">MARHSFFCVDGHTCGNPVRLVAGGGPNLNGSTMMEKRAHFLAEYDWIRTGLMFEPRGHDMMSGSILYPPTRPDCDVAVLFIETSGCLPMCGHGTIGTVTMAIEQGLVTPKTPGKLNLDTPAGLVAIEYEQDGQYVERVRLTNVPAFLYAEGLEVECPDLGPIKVDVAYGGNFYAIVEPQENYTDMDDYSALQLIAWSPVLRQRLNEKYKFQHPELPDINRLSHILWTGKPKHPQAHARNAVFYGDKAIDRSPCGTGTSARMAQLAAKGKLKPCDEFIHESIIGSLFHGRVERAAEVAGRPAIVPSIAGWARMTGYNTIFIDDRDPFAHGFSMA</sequence>
<keyword id="KW-0413">Isomerase</keyword>
<keyword id="KW-1185">Reference proteome</keyword>
<gene>
    <name type="primary">prpA</name>
    <name type="ordered locus">BAB1_1800</name>
</gene>
<name>4HYPE_BRUA2</name>